<protein>
    <recommendedName>
        <fullName evidence="1">Glycerol-3-phosphate acyltransferase</fullName>
    </recommendedName>
    <alternativeName>
        <fullName evidence="1">Acyl-PO4 G3P acyltransferase</fullName>
    </alternativeName>
    <alternativeName>
        <fullName evidence="1">Acyl-phosphate--glycerol-3-phosphate acyltransferase</fullName>
    </alternativeName>
    <alternativeName>
        <fullName evidence="1">G3P acyltransferase</fullName>
        <shortName evidence="1">GPAT</shortName>
        <ecNumber evidence="1">2.3.1.275</ecNumber>
    </alternativeName>
    <alternativeName>
        <fullName evidence="1">Lysophosphatidic acid synthase</fullName>
        <shortName evidence="1">LPA synthase</shortName>
    </alternativeName>
</protein>
<sequence length="232" mass="24630">MLTFLAIITVAYLIGSIPTSIIAGRMLKGIDIREFGSGNAGGTNAFRVLGWKAGLAVTLIDIAKGTIAAVPVVAFFKAHPLGAFPDMNEIALNLIAGMSAVIGHVFTVFAGFKGGKGVSTAAGMLIGIAPISMLMVIGVFILAITLTRYVSVGSILAAIAFPLIIAIRKYLFDLGTGLDYHFFGKWLVHDSLDYHLLIFGGIVAAAIIYTHRANIKRLFSGTENRLTFGRRS</sequence>
<organism>
    <name type="scientific">Chlorobaculum parvum (strain DSM 263 / NCIMB 8327)</name>
    <name type="common">Chlorobium vibrioforme subsp. thiosulfatophilum</name>
    <dbReference type="NCBI Taxonomy" id="517417"/>
    <lineage>
        <taxon>Bacteria</taxon>
        <taxon>Pseudomonadati</taxon>
        <taxon>Chlorobiota</taxon>
        <taxon>Chlorobiia</taxon>
        <taxon>Chlorobiales</taxon>
        <taxon>Chlorobiaceae</taxon>
        <taxon>Chlorobaculum</taxon>
    </lineage>
</organism>
<feature type="chain" id="PRO_1000136074" description="Glycerol-3-phosphate acyltransferase">
    <location>
        <begin position="1"/>
        <end position="232"/>
    </location>
</feature>
<feature type="transmembrane region" description="Helical" evidence="1">
    <location>
        <begin position="4"/>
        <end position="24"/>
    </location>
</feature>
<feature type="transmembrane region" description="Helical" evidence="1">
    <location>
        <begin position="56"/>
        <end position="76"/>
    </location>
</feature>
<feature type="transmembrane region" description="Helical" evidence="1">
    <location>
        <begin position="90"/>
        <end position="110"/>
    </location>
</feature>
<feature type="transmembrane region" description="Helical" evidence="1">
    <location>
        <begin position="124"/>
        <end position="144"/>
    </location>
</feature>
<feature type="transmembrane region" description="Helical" evidence="1">
    <location>
        <begin position="147"/>
        <end position="167"/>
    </location>
</feature>
<feature type="transmembrane region" description="Helical" evidence="1">
    <location>
        <begin position="191"/>
        <end position="211"/>
    </location>
</feature>
<dbReference type="EC" id="2.3.1.275" evidence="1"/>
<dbReference type="EMBL" id="CP001099">
    <property type="protein sequence ID" value="ACF12390.1"/>
    <property type="molecule type" value="Genomic_DNA"/>
</dbReference>
<dbReference type="RefSeq" id="WP_012503223.1">
    <property type="nucleotide sequence ID" value="NC_011027.1"/>
</dbReference>
<dbReference type="SMR" id="B3QLQ4"/>
<dbReference type="STRING" id="517417.Cpar_2001"/>
<dbReference type="KEGG" id="cpc:Cpar_2001"/>
<dbReference type="eggNOG" id="COG0344">
    <property type="taxonomic scope" value="Bacteria"/>
</dbReference>
<dbReference type="HOGENOM" id="CLU_081254_3_0_10"/>
<dbReference type="OrthoDB" id="9777124at2"/>
<dbReference type="UniPathway" id="UPA00085"/>
<dbReference type="Proteomes" id="UP000008811">
    <property type="component" value="Chromosome"/>
</dbReference>
<dbReference type="GO" id="GO:0005886">
    <property type="term" value="C:plasma membrane"/>
    <property type="evidence" value="ECO:0007669"/>
    <property type="project" value="UniProtKB-SubCell"/>
</dbReference>
<dbReference type="GO" id="GO:0043772">
    <property type="term" value="F:acyl-phosphate glycerol-3-phosphate acyltransferase activity"/>
    <property type="evidence" value="ECO:0007669"/>
    <property type="project" value="UniProtKB-UniRule"/>
</dbReference>
<dbReference type="GO" id="GO:0008654">
    <property type="term" value="P:phospholipid biosynthetic process"/>
    <property type="evidence" value="ECO:0007669"/>
    <property type="project" value="UniProtKB-UniRule"/>
</dbReference>
<dbReference type="HAMAP" id="MF_01043">
    <property type="entry name" value="PlsY"/>
    <property type="match status" value="1"/>
</dbReference>
<dbReference type="InterPro" id="IPR003811">
    <property type="entry name" value="G3P_acylTferase_PlsY"/>
</dbReference>
<dbReference type="NCBIfam" id="TIGR00023">
    <property type="entry name" value="glycerol-3-phosphate 1-O-acyltransferase PlsY"/>
    <property type="match status" value="1"/>
</dbReference>
<dbReference type="PANTHER" id="PTHR30309:SF0">
    <property type="entry name" value="GLYCEROL-3-PHOSPHATE ACYLTRANSFERASE-RELATED"/>
    <property type="match status" value="1"/>
</dbReference>
<dbReference type="PANTHER" id="PTHR30309">
    <property type="entry name" value="INNER MEMBRANE PROTEIN YGIH"/>
    <property type="match status" value="1"/>
</dbReference>
<dbReference type="Pfam" id="PF02660">
    <property type="entry name" value="G3P_acyltransf"/>
    <property type="match status" value="1"/>
</dbReference>
<dbReference type="SMART" id="SM01207">
    <property type="entry name" value="G3P_acyltransf"/>
    <property type="match status" value="1"/>
</dbReference>
<accession>B3QLQ4</accession>
<proteinExistence type="inferred from homology"/>
<reference key="1">
    <citation type="submission" date="2008-06" db="EMBL/GenBank/DDBJ databases">
        <title>Complete sequence of Chlorobaculum parvum NCIB 8327.</title>
        <authorList>
            <consortium name="US DOE Joint Genome Institute"/>
            <person name="Lucas S."/>
            <person name="Copeland A."/>
            <person name="Lapidus A."/>
            <person name="Glavina del Rio T."/>
            <person name="Dalin E."/>
            <person name="Tice H."/>
            <person name="Bruce D."/>
            <person name="Goodwin L."/>
            <person name="Pitluck S."/>
            <person name="Schmutz J."/>
            <person name="Larimer F."/>
            <person name="Land M."/>
            <person name="Hauser L."/>
            <person name="Kyrpides N."/>
            <person name="Mikhailova N."/>
            <person name="Zhao F."/>
            <person name="Li T."/>
            <person name="Liu Z."/>
            <person name="Overmann J."/>
            <person name="Bryant D.A."/>
            <person name="Richardson P."/>
        </authorList>
    </citation>
    <scope>NUCLEOTIDE SEQUENCE [LARGE SCALE GENOMIC DNA]</scope>
    <source>
        <strain>DSM 263 / NCIMB 8327</strain>
    </source>
</reference>
<comment type="function">
    <text evidence="1">Catalyzes the transfer of an acyl group from acyl-phosphate (acyl-PO(4)) to glycerol-3-phosphate (G3P) to form lysophosphatidic acid (LPA). This enzyme utilizes acyl-phosphate as fatty acyl donor, but not acyl-CoA or acyl-ACP.</text>
</comment>
<comment type="catalytic activity">
    <reaction evidence="1">
        <text>an acyl phosphate + sn-glycerol 3-phosphate = a 1-acyl-sn-glycero-3-phosphate + phosphate</text>
        <dbReference type="Rhea" id="RHEA:34075"/>
        <dbReference type="ChEBI" id="CHEBI:43474"/>
        <dbReference type="ChEBI" id="CHEBI:57597"/>
        <dbReference type="ChEBI" id="CHEBI:57970"/>
        <dbReference type="ChEBI" id="CHEBI:59918"/>
        <dbReference type="EC" id="2.3.1.275"/>
    </reaction>
</comment>
<comment type="pathway">
    <text evidence="1">Lipid metabolism; phospholipid metabolism.</text>
</comment>
<comment type="subunit">
    <text evidence="1">Probably interacts with PlsX.</text>
</comment>
<comment type="subcellular location">
    <subcellularLocation>
        <location evidence="1">Cell inner membrane</location>
        <topology evidence="1">Multi-pass membrane protein</topology>
    </subcellularLocation>
</comment>
<comment type="similarity">
    <text evidence="1">Belongs to the PlsY family.</text>
</comment>
<evidence type="ECO:0000255" key="1">
    <source>
        <dbReference type="HAMAP-Rule" id="MF_01043"/>
    </source>
</evidence>
<name>PLSY_CHLP8</name>
<keyword id="KW-0997">Cell inner membrane</keyword>
<keyword id="KW-1003">Cell membrane</keyword>
<keyword id="KW-0444">Lipid biosynthesis</keyword>
<keyword id="KW-0443">Lipid metabolism</keyword>
<keyword id="KW-0472">Membrane</keyword>
<keyword id="KW-0594">Phospholipid biosynthesis</keyword>
<keyword id="KW-1208">Phospholipid metabolism</keyword>
<keyword id="KW-0808">Transferase</keyword>
<keyword id="KW-0812">Transmembrane</keyword>
<keyword id="KW-1133">Transmembrane helix</keyword>
<gene>
    <name evidence="1" type="primary">plsY</name>
    <name type="ordered locus">Cpar_2001</name>
</gene>